<feature type="chain" id="PRO_0000194752" description="Small ribosomal subunit protein eS21">
    <location>
        <begin position="1"/>
        <end position="81"/>
    </location>
</feature>
<reference key="1">
    <citation type="submission" date="1996-07" db="EMBL/GenBank/DDBJ databases">
        <authorList>
            <person name="Dresselhaus T."/>
            <person name="Cordts S."/>
            <person name="Heuer S."/>
            <person name="Loerz H."/>
            <person name="Kranz E."/>
        </authorList>
    </citation>
    <scope>NUCLEOTIDE SEQUENCE [MRNA]</scope>
    <source>
        <strain>cv. A188</strain>
    </source>
</reference>
<dbReference type="EMBL" id="X98656">
    <property type="protein sequence ID" value="CAA67225.1"/>
    <property type="molecule type" value="mRNA"/>
</dbReference>
<dbReference type="PIR" id="T03945">
    <property type="entry name" value="T03945"/>
</dbReference>
<dbReference type="RefSeq" id="NP_001105477.1">
    <property type="nucleotide sequence ID" value="NM_001112007.2"/>
</dbReference>
<dbReference type="SMR" id="Q41852"/>
<dbReference type="FunCoup" id="Q41852">
    <property type="interactions" value="2557"/>
</dbReference>
<dbReference type="STRING" id="4577.Q41852"/>
<dbReference type="PaxDb" id="4577-GRMZM2G134109_P01"/>
<dbReference type="EnsemblPlants" id="Zm00001eb016600_T001">
    <property type="protein sequence ID" value="Zm00001eb016600_P001"/>
    <property type="gene ID" value="Zm00001eb016600"/>
</dbReference>
<dbReference type="GeneID" id="542449"/>
<dbReference type="Gramene" id="Zm00001eb016600_T001">
    <property type="protein sequence ID" value="Zm00001eb016600_P001"/>
    <property type="gene ID" value="Zm00001eb016600"/>
</dbReference>
<dbReference type="KEGG" id="zma:542449"/>
<dbReference type="MaizeGDB" id="82786"/>
<dbReference type="eggNOG" id="KOG3486">
    <property type="taxonomic scope" value="Eukaryota"/>
</dbReference>
<dbReference type="HOGENOM" id="CLU_167122_1_0_1"/>
<dbReference type="InParanoid" id="Q41852"/>
<dbReference type="OMA" id="GESDACM"/>
<dbReference type="Proteomes" id="UP000007305">
    <property type="component" value="Chromosome 1"/>
</dbReference>
<dbReference type="ExpressionAtlas" id="Q41852">
    <property type="expression patterns" value="baseline and differential"/>
</dbReference>
<dbReference type="GO" id="GO:0022627">
    <property type="term" value="C:cytosolic small ribosomal subunit"/>
    <property type="evidence" value="ECO:0000318"/>
    <property type="project" value="GO_Central"/>
</dbReference>
<dbReference type="GO" id="GO:0003735">
    <property type="term" value="F:structural constituent of ribosome"/>
    <property type="evidence" value="ECO:0000318"/>
    <property type="project" value="GO_Central"/>
</dbReference>
<dbReference type="GO" id="GO:0000447">
    <property type="term" value="P:endonucleolytic cleavage in ITS1 to separate SSU-rRNA from 5.8S rRNA and LSU-rRNA from tricistronic rRNA transcript (SSU-rRNA, 5.8S rRNA, LSU-rRNA)"/>
    <property type="evidence" value="ECO:0000318"/>
    <property type="project" value="GO_Central"/>
</dbReference>
<dbReference type="GO" id="GO:0000461">
    <property type="term" value="P:endonucleolytic cleavage to generate mature 3'-end of SSU-rRNA from (SSU-rRNA, 5.8S rRNA, LSU-rRNA)"/>
    <property type="evidence" value="ECO:0000318"/>
    <property type="project" value="GO_Central"/>
</dbReference>
<dbReference type="GO" id="GO:0006412">
    <property type="term" value="P:translation"/>
    <property type="evidence" value="ECO:0007669"/>
    <property type="project" value="InterPro"/>
</dbReference>
<dbReference type="FunFam" id="3.30.1230.20:FF:000002">
    <property type="entry name" value="40S ribosomal protein S21"/>
    <property type="match status" value="1"/>
</dbReference>
<dbReference type="Gene3D" id="3.30.1230.20">
    <property type="match status" value="1"/>
</dbReference>
<dbReference type="InterPro" id="IPR001931">
    <property type="entry name" value="Ribosomal_eS21"/>
</dbReference>
<dbReference type="InterPro" id="IPR018279">
    <property type="entry name" value="Ribosomal_eS21_CS"/>
</dbReference>
<dbReference type="InterPro" id="IPR038579">
    <property type="entry name" value="Ribosomal_eS21_sf"/>
</dbReference>
<dbReference type="PANTHER" id="PTHR10442">
    <property type="entry name" value="40S RIBOSOMAL PROTEIN S21"/>
    <property type="match status" value="1"/>
</dbReference>
<dbReference type="Pfam" id="PF01249">
    <property type="entry name" value="Ribosomal_S21e"/>
    <property type="match status" value="1"/>
</dbReference>
<dbReference type="PIRSF" id="PIRSF002148">
    <property type="entry name" value="Ribosomal_S21e"/>
    <property type="match status" value="1"/>
</dbReference>
<dbReference type="PROSITE" id="PS00996">
    <property type="entry name" value="RIBOSOMAL_S21E"/>
    <property type="match status" value="1"/>
</dbReference>
<organism>
    <name type="scientific">Zea mays</name>
    <name type="common">Maize</name>
    <dbReference type="NCBI Taxonomy" id="4577"/>
    <lineage>
        <taxon>Eukaryota</taxon>
        <taxon>Viridiplantae</taxon>
        <taxon>Streptophyta</taxon>
        <taxon>Embryophyta</taxon>
        <taxon>Tracheophyta</taxon>
        <taxon>Spermatophyta</taxon>
        <taxon>Magnoliopsida</taxon>
        <taxon>Liliopsida</taxon>
        <taxon>Poales</taxon>
        <taxon>Poaceae</taxon>
        <taxon>PACMAD clade</taxon>
        <taxon>Panicoideae</taxon>
        <taxon>Andropogonodae</taxon>
        <taxon>Andropogoneae</taxon>
        <taxon>Tripsacinae</taxon>
        <taxon>Zea</taxon>
    </lineage>
</organism>
<accession>Q41852</accession>
<name>RS21_MAIZE</name>
<sequence length="81" mass="9020">MQNEEGKTVDLYVPRKCSATNRIITAKDHASVQINIGHLDANGLYDGHFTTFALSGFVRAQGDADSSLDRLWQKKKAEIKQ</sequence>
<proteinExistence type="inferred from homology"/>
<keyword id="KW-1185">Reference proteome</keyword>
<keyword id="KW-0687">Ribonucleoprotein</keyword>
<keyword id="KW-0689">Ribosomal protein</keyword>
<protein>
    <recommendedName>
        <fullName evidence="1">Small ribosomal subunit protein eS21</fullName>
    </recommendedName>
    <alternativeName>
        <fullName>40S ribosomal protein S21</fullName>
    </alternativeName>
</protein>
<comment type="similarity">
    <text evidence="1">Belongs to the eukaryotic ribosomal protein eS21 family.</text>
</comment>
<evidence type="ECO:0000305" key="1"/>
<gene>
    <name type="primary">RPS21</name>
</gene>